<keyword id="KW-0067">ATP-binding</keyword>
<keyword id="KW-0119">Carbohydrate metabolism</keyword>
<keyword id="KW-0963">Cytoplasm</keyword>
<keyword id="KW-0299">Galactose metabolism</keyword>
<keyword id="KW-0418">Kinase</keyword>
<keyword id="KW-0460">Magnesium</keyword>
<keyword id="KW-0479">Metal-binding</keyword>
<keyword id="KW-0547">Nucleotide-binding</keyword>
<keyword id="KW-0808">Transferase</keyword>
<protein>
    <recommendedName>
        <fullName evidence="1">Galactokinase</fullName>
        <ecNumber evidence="1">2.7.1.6</ecNumber>
    </recommendedName>
    <alternativeName>
        <fullName evidence="1">Galactose kinase</fullName>
    </alternativeName>
</protein>
<sequence length="388" mass="43450">MNTSQLREKFKEVFGVEADHTFFSPGRINLIGEHTDYNGGNVLPVAITLGTYGAARKRDDKVLRFFSANFEEKGIIEVPLENLRFEKEHNWTNYPKGVLHFLQEAGHTIDSGMDIYIYGNIPNGSGLSSSSSLELLIGVIVEKLYDIKLERLDLVKIGKQTENDFIGVNSGIMDQFAIGMGADQCAIYLDTNTLKYDLVPLDLKDNVVVIMNTNKRRELADSKYNERRAECETAVSELQEKLDIQTLGELDFLTFDAYSYLIKDENRIKRARHVVLENQRTLQARKALETGDLEGFGRLMNASHVSLEYDYEVTGLELDTLAHTAWEQEGVLGARMTGAGFGGCAIALVNKDKVEDFKKAVGQRYEEVVGYAPSFYIAEVTGGSRVLD</sequence>
<dbReference type="EC" id="2.7.1.6" evidence="1"/>
<dbReference type="EMBL" id="U61402">
    <property type="protein sequence ID" value="AAD00093.1"/>
    <property type="molecule type" value="Genomic_DNA"/>
</dbReference>
<dbReference type="RefSeq" id="WP_179970632.1">
    <property type="nucleotide sequence ID" value="NZ_CP046134.1"/>
</dbReference>
<dbReference type="SMR" id="Q9ZB10"/>
<dbReference type="eggNOG" id="COG0153">
    <property type="taxonomic scope" value="Bacteria"/>
</dbReference>
<dbReference type="UniPathway" id="UPA00214"/>
<dbReference type="GO" id="GO:0005829">
    <property type="term" value="C:cytosol"/>
    <property type="evidence" value="ECO:0007669"/>
    <property type="project" value="TreeGrafter"/>
</dbReference>
<dbReference type="GO" id="GO:0005524">
    <property type="term" value="F:ATP binding"/>
    <property type="evidence" value="ECO:0007669"/>
    <property type="project" value="UniProtKB-UniRule"/>
</dbReference>
<dbReference type="GO" id="GO:0004335">
    <property type="term" value="F:galactokinase activity"/>
    <property type="evidence" value="ECO:0007669"/>
    <property type="project" value="UniProtKB-UniRule"/>
</dbReference>
<dbReference type="GO" id="GO:0000287">
    <property type="term" value="F:magnesium ion binding"/>
    <property type="evidence" value="ECO:0007669"/>
    <property type="project" value="UniProtKB-UniRule"/>
</dbReference>
<dbReference type="GO" id="GO:0006012">
    <property type="term" value="P:galactose metabolic process"/>
    <property type="evidence" value="ECO:0007669"/>
    <property type="project" value="UniProtKB-UniRule"/>
</dbReference>
<dbReference type="FunFam" id="3.30.230.10:FF:000017">
    <property type="entry name" value="Galactokinase"/>
    <property type="match status" value="1"/>
</dbReference>
<dbReference type="FunFam" id="3.30.70.890:FF:000001">
    <property type="entry name" value="Galactokinase"/>
    <property type="match status" value="1"/>
</dbReference>
<dbReference type="Gene3D" id="3.30.230.10">
    <property type="match status" value="1"/>
</dbReference>
<dbReference type="Gene3D" id="3.30.70.890">
    <property type="entry name" value="GHMP kinase, C-terminal domain"/>
    <property type="match status" value="1"/>
</dbReference>
<dbReference type="HAMAP" id="MF_00246">
    <property type="entry name" value="Galactokinase"/>
    <property type="match status" value="1"/>
</dbReference>
<dbReference type="InterPro" id="IPR000705">
    <property type="entry name" value="Galactokinase"/>
</dbReference>
<dbReference type="InterPro" id="IPR022963">
    <property type="entry name" value="Galactokinase_bac"/>
</dbReference>
<dbReference type="InterPro" id="IPR019741">
    <property type="entry name" value="Galactokinase_CS"/>
</dbReference>
<dbReference type="InterPro" id="IPR019539">
    <property type="entry name" value="GalKase_N"/>
</dbReference>
<dbReference type="InterPro" id="IPR013750">
    <property type="entry name" value="GHMP_kinase_C_dom"/>
</dbReference>
<dbReference type="InterPro" id="IPR036554">
    <property type="entry name" value="GHMP_kinase_C_sf"/>
</dbReference>
<dbReference type="InterPro" id="IPR006204">
    <property type="entry name" value="GHMP_kinase_N_dom"/>
</dbReference>
<dbReference type="InterPro" id="IPR006203">
    <property type="entry name" value="GHMP_knse_ATP-bd_CS"/>
</dbReference>
<dbReference type="InterPro" id="IPR006206">
    <property type="entry name" value="Mevalonate/galactokinase"/>
</dbReference>
<dbReference type="InterPro" id="IPR020568">
    <property type="entry name" value="Ribosomal_Su5_D2-typ_SF"/>
</dbReference>
<dbReference type="InterPro" id="IPR014721">
    <property type="entry name" value="Ribsml_uS5_D2-typ_fold_subgr"/>
</dbReference>
<dbReference type="NCBIfam" id="TIGR00131">
    <property type="entry name" value="gal_kin"/>
    <property type="match status" value="1"/>
</dbReference>
<dbReference type="NCBIfam" id="NF003705">
    <property type="entry name" value="PRK05322.1"/>
    <property type="match status" value="1"/>
</dbReference>
<dbReference type="PANTHER" id="PTHR10457:SF7">
    <property type="entry name" value="GALACTOKINASE-RELATED"/>
    <property type="match status" value="1"/>
</dbReference>
<dbReference type="PANTHER" id="PTHR10457">
    <property type="entry name" value="MEVALONATE KINASE/GALACTOKINASE"/>
    <property type="match status" value="1"/>
</dbReference>
<dbReference type="Pfam" id="PF10509">
    <property type="entry name" value="GalKase_gal_bdg"/>
    <property type="match status" value="1"/>
</dbReference>
<dbReference type="Pfam" id="PF08544">
    <property type="entry name" value="GHMP_kinases_C"/>
    <property type="match status" value="1"/>
</dbReference>
<dbReference type="Pfam" id="PF00288">
    <property type="entry name" value="GHMP_kinases_N"/>
    <property type="match status" value="1"/>
</dbReference>
<dbReference type="PIRSF" id="PIRSF000530">
    <property type="entry name" value="Galactokinase"/>
    <property type="match status" value="1"/>
</dbReference>
<dbReference type="PRINTS" id="PR00473">
    <property type="entry name" value="GALCTOKINASE"/>
</dbReference>
<dbReference type="PRINTS" id="PR00959">
    <property type="entry name" value="MEVGALKINASE"/>
</dbReference>
<dbReference type="SUPFAM" id="SSF55060">
    <property type="entry name" value="GHMP Kinase, C-terminal domain"/>
    <property type="match status" value="1"/>
</dbReference>
<dbReference type="SUPFAM" id="SSF54211">
    <property type="entry name" value="Ribosomal protein S5 domain 2-like"/>
    <property type="match status" value="1"/>
</dbReference>
<dbReference type="PROSITE" id="PS00106">
    <property type="entry name" value="GALACTOKINASE"/>
    <property type="match status" value="1"/>
</dbReference>
<dbReference type="PROSITE" id="PS00627">
    <property type="entry name" value="GHMP_KINASES_ATP"/>
    <property type="match status" value="1"/>
</dbReference>
<name>GAL1_STRTR</name>
<proteinExistence type="inferred from homology"/>
<gene>
    <name evidence="1" type="primary">galK</name>
</gene>
<accession>Q9ZB10</accession>
<evidence type="ECO:0000255" key="1">
    <source>
        <dbReference type="HAMAP-Rule" id="MF_00246"/>
    </source>
</evidence>
<feature type="chain" id="PRO_0000184630" description="Galactokinase">
    <location>
        <begin position="1"/>
        <end position="388"/>
    </location>
</feature>
<feature type="active site" description="Proton acceptor" evidence="1">
    <location>
        <position position="174"/>
    </location>
</feature>
<feature type="binding site" evidence="1">
    <location>
        <begin position="33"/>
        <end position="36"/>
    </location>
    <ligand>
        <name>substrate</name>
    </ligand>
</feature>
<feature type="binding site" evidence="1">
    <location>
        <position position="67"/>
    </location>
    <ligand>
        <name>ATP</name>
        <dbReference type="ChEBI" id="CHEBI:30616"/>
    </ligand>
</feature>
<feature type="binding site" evidence="1">
    <location>
        <begin position="124"/>
        <end position="130"/>
    </location>
    <ligand>
        <name>ATP</name>
        <dbReference type="ChEBI" id="CHEBI:30616"/>
    </ligand>
</feature>
<feature type="binding site" evidence="1">
    <location>
        <position position="130"/>
    </location>
    <ligand>
        <name>Mg(2+)</name>
        <dbReference type="ChEBI" id="CHEBI:18420"/>
    </ligand>
</feature>
<feature type="binding site" evidence="1">
    <location>
        <position position="162"/>
    </location>
    <ligand>
        <name>Mg(2+)</name>
        <dbReference type="ChEBI" id="CHEBI:18420"/>
    </ligand>
</feature>
<feature type="binding site" evidence="1">
    <location>
        <position position="224"/>
    </location>
    <ligand>
        <name>substrate</name>
    </ligand>
</feature>
<feature type="site" description="Transition state stabilizer" evidence="1">
    <location>
        <position position="27"/>
    </location>
</feature>
<comment type="function">
    <text evidence="1">Catalyzes the transfer of the gamma-phosphate of ATP to D-galactose to form alpha-D-galactose-1-phosphate (Gal-1-P).</text>
</comment>
<comment type="catalytic activity">
    <reaction evidence="1">
        <text>alpha-D-galactose + ATP = alpha-D-galactose 1-phosphate + ADP + H(+)</text>
        <dbReference type="Rhea" id="RHEA:13553"/>
        <dbReference type="ChEBI" id="CHEBI:15378"/>
        <dbReference type="ChEBI" id="CHEBI:28061"/>
        <dbReference type="ChEBI" id="CHEBI:30616"/>
        <dbReference type="ChEBI" id="CHEBI:58336"/>
        <dbReference type="ChEBI" id="CHEBI:456216"/>
        <dbReference type="EC" id="2.7.1.6"/>
    </reaction>
</comment>
<comment type="pathway">
    <text evidence="1">Carbohydrate metabolism; galactose metabolism.</text>
</comment>
<comment type="subcellular location">
    <subcellularLocation>
        <location evidence="1">Cytoplasm</location>
    </subcellularLocation>
</comment>
<comment type="similarity">
    <text evidence="1">Belongs to the GHMP kinase family. GalK subfamily.</text>
</comment>
<reference key="1">
    <citation type="journal article" date="2001" name="J. Bacteriol.">
        <title>Activation of silent gal genes in the lac-gal regulon of Streptococcus thermophilus.</title>
        <authorList>
            <person name="Vaughan E.E."/>
            <person name="van den Bogaard P.T.C."/>
            <person name="Catzeddu P."/>
            <person name="Kuipers O.P."/>
            <person name="de Vos W.M."/>
        </authorList>
    </citation>
    <scope>NUCLEOTIDE SEQUENCE [GENOMIC DNA]</scope>
    <source>
        <strain>CNRZ 302</strain>
    </source>
</reference>
<organism>
    <name type="scientific">Streptococcus thermophilus</name>
    <dbReference type="NCBI Taxonomy" id="1308"/>
    <lineage>
        <taxon>Bacteria</taxon>
        <taxon>Bacillati</taxon>
        <taxon>Bacillota</taxon>
        <taxon>Bacilli</taxon>
        <taxon>Lactobacillales</taxon>
        <taxon>Streptococcaceae</taxon>
        <taxon>Streptococcus</taxon>
    </lineage>
</organism>